<organism>
    <name type="scientific">Drosophila melanogaster</name>
    <name type="common">Fruit fly</name>
    <dbReference type="NCBI Taxonomy" id="7227"/>
    <lineage>
        <taxon>Eukaryota</taxon>
        <taxon>Metazoa</taxon>
        <taxon>Ecdysozoa</taxon>
        <taxon>Arthropoda</taxon>
        <taxon>Hexapoda</taxon>
        <taxon>Insecta</taxon>
        <taxon>Pterygota</taxon>
        <taxon>Neoptera</taxon>
        <taxon>Endopterygota</taxon>
        <taxon>Diptera</taxon>
        <taxon>Brachycera</taxon>
        <taxon>Muscomorpha</taxon>
        <taxon>Ephydroidea</taxon>
        <taxon>Drosophilidae</taxon>
        <taxon>Drosophila</taxon>
        <taxon>Sophophora</taxon>
    </lineage>
</organism>
<sequence>MAQPPPDQNFYHHPLPHTHTHPHPHSHPHPHSHPHPHHQHPQLQLPPQFRNPFDLLFDERTGAINYNYIRPYLPNQMPKPDVFPSEELPDSLVMRRPRRTRTTFTSSQIAELEQHFLQGRYLTAPRLADLSAKLALGTAQVKIWFKNRRRRHKIQSDQHKDQSYEGMPLSPGMKQSDGDPPSLQTLSLGGGATPNALTPSPTPSTPTAHMTEHYSESFNAYYNYNGGHNHAQANRHMHMQYPSGGGPGPGSTNVNGGQFFQQQQVHNHQQQLHHQGNHVPHQMQQQQQQAQQQQYHHFDFQQKQASACRVLVKDEPEADYNFNSSYYMRSGMSGATASASAVARGAASPGSEVYEPLTPKNDESPSLCGIGIGGPCAIAVGETEAADDMDDGTSKKTTLQILEPLKGLDKSCDDGSSDDMSTGIRALAGTGNRGAAFAKFGKPSPPQGPQPPLGMGGVAMGESNQYQCTMDTIMQAYNPHRNAAGNSQFAYCFN</sequence>
<evidence type="ECO:0000255" key="1">
    <source>
        <dbReference type="PROSITE-ProRule" id="PRU00108"/>
    </source>
</evidence>
<evidence type="ECO:0000256" key="2">
    <source>
        <dbReference type="SAM" id="MobiDB-lite"/>
    </source>
</evidence>
<evidence type="ECO:0000269" key="3">
    <source>
    </source>
</evidence>
<evidence type="ECO:0000269" key="4">
    <source>
    </source>
</evidence>
<evidence type="ECO:0000269" key="5">
    <source>
    </source>
</evidence>
<evidence type="ECO:0000269" key="6">
    <source>
    </source>
</evidence>
<evidence type="ECO:0000269" key="7">
    <source>
    </source>
</evidence>
<evidence type="ECO:0000269" key="8">
    <source>
    </source>
</evidence>
<evidence type="ECO:0000269" key="9">
    <source>
    </source>
</evidence>
<evidence type="ECO:0000269" key="10">
    <source>
    </source>
</evidence>
<evidence type="ECO:0000303" key="11">
    <source>
    </source>
</evidence>
<evidence type="ECO:0000303" key="12">
    <source>
    </source>
</evidence>
<evidence type="ECO:0000305" key="13"/>
<evidence type="ECO:0000305" key="14">
    <source>
    </source>
</evidence>
<evidence type="ECO:0000312" key="15">
    <source>
        <dbReference type="FlyBase" id="FBgn0000166"/>
    </source>
</evidence>
<evidence type="ECO:0007744" key="16">
    <source>
        <dbReference type="PDB" id="1ZQ3"/>
    </source>
</evidence>
<evidence type="ECO:0007829" key="17">
    <source>
        <dbReference type="PDB" id="1ZQ3"/>
    </source>
</evidence>
<proteinExistence type="evidence at protein level"/>
<dbReference type="EMBL" id="X07870">
    <property type="protein sequence ID" value="CAA30720.1"/>
    <property type="molecule type" value="Genomic_DNA"/>
</dbReference>
<dbReference type="EMBL" id="X14458">
    <property type="protein sequence ID" value="CAA32627.1"/>
    <property type="molecule type" value="mRNA"/>
</dbReference>
<dbReference type="EMBL" id="X14459">
    <property type="protein sequence ID" value="CAB37631.1"/>
    <property type="molecule type" value="mRNA"/>
</dbReference>
<dbReference type="EMBL" id="X14460">
    <property type="protein sequence ID" value="CAA32629.1"/>
    <property type="molecule type" value="mRNA"/>
</dbReference>
<dbReference type="EMBL" id="AF466621">
    <property type="protein sequence ID" value="AAL77008.1"/>
    <property type="molecule type" value="Genomic_DNA"/>
</dbReference>
<dbReference type="EMBL" id="AF466622">
    <property type="protein sequence ID" value="AAL77009.1"/>
    <property type="molecule type" value="Genomic_DNA"/>
</dbReference>
<dbReference type="EMBL" id="AF466623">
    <property type="protein sequence ID" value="AAL77010.1"/>
    <property type="molecule type" value="Genomic_DNA"/>
</dbReference>
<dbReference type="EMBL" id="AF466624">
    <property type="protein sequence ID" value="AAL77011.1"/>
    <property type="molecule type" value="Genomic_DNA"/>
</dbReference>
<dbReference type="EMBL" id="AF466625">
    <property type="protein sequence ID" value="AAL77012.1"/>
    <property type="molecule type" value="Genomic_DNA"/>
</dbReference>
<dbReference type="EMBL" id="AF466626">
    <property type="protein sequence ID" value="AAL77013.1"/>
    <property type="molecule type" value="Genomic_DNA"/>
</dbReference>
<dbReference type="EMBL" id="AF466627">
    <property type="protein sequence ID" value="AAL77014.1"/>
    <property type="molecule type" value="Genomic_DNA"/>
</dbReference>
<dbReference type="EMBL" id="AF466628">
    <property type="protein sequence ID" value="AAL77015.1"/>
    <property type="molecule type" value="Genomic_DNA"/>
</dbReference>
<dbReference type="EMBL" id="AF466629">
    <property type="protein sequence ID" value="AAL77016.1"/>
    <property type="molecule type" value="Genomic_DNA"/>
</dbReference>
<dbReference type="EMBL" id="AF466630">
    <property type="protein sequence ID" value="AAL77017.1"/>
    <property type="molecule type" value="Genomic_DNA"/>
</dbReference>
<dbReference type="EMBL" id="AF466631">
    <property type="protein sequence ID" value="AAL77018.1"/>
    <property type="molecule type" value="Genomic_DNA"/>
</dbReference>
<dbReference type="EMBL" id="AF466632">
    <property type="protein sequence ID" value="AAL77019.1"/>
    <property type="molecule type" value="Genomic_DNA"/>
</dbReference>
<dbReference type="EMBL" id="AF466633">
    <property type="protein sequence ID" value="AAL77020.1"/>
    <property type="molecule type" value="Genomic_DNA"/>
</dbReference>
<dbReference type="EMBL" id="AF466634">
    <property type="protein sequence ID" value="AAL77021.1"/>
    <property type="molecule type" value="Genomic_DNA"/>
</dbReference>
<dbReference type="EMBL" id="AF466635">
    <property type="protein sequence ID" value="AAL77022.1"/>
    <property type="molecule type" value="Genomic_DNA"/>
</dbReference>
<dbReference type="EMBL" id="AF466636">
    <property type="protein sequence ID" value="AAL77023.1"/>
    <property type="molecule type" value="Genomic_DNA"/>
</dbReference>
<dbReference type="EMBL" id="AF466637">
    <property type="protein sequence ID" value="AAL77024.1"/>
    <property type="molecule type" value="Genomic_DNA"/>
</dbReference>
<dbReference type="EMBL" id="AF466638">
    <property type="protein sequence ID" value="AAL77025.1"/>
    <property type="molecule type" value="Genomic_DNA"/>
</dbReference>
<dbReference type="EMBL" id="AF466639">
    <property type="protein sequence ID" value="AAL77026.1"/>
    <property type="molecule type" value="Genomic_DNA"/>
</dbReference>
<dbReference type="EMBL" id="AF466640">
    <property type="protein sequence ID" value="AAL77027.1"/>
    <property type="molecule type" value="Genomic_DNA"/>
</dbReference>
<dbReference type="EMBL" id="AF466641">
    <property type="protein sequence ID" value="AAL77028.1"/>
    <property type="molecule type" value="Genomic_DNA"/>
</dbReference>
<dbReference type="EMBL" id="AF466642">
    <property type="protein sequence ID" value="AAL77029.1"/>
    <property type="molecule type" value="Genomic_DNA"/>
</dbReference>
<dbReference type="EMBL" id="AF466643">
    <property type="protein sequence ID" value="AAL77030.1"/>
    <property type="molecule type" value="Genomic_DNA"/>
</dbReference>
<dbReference type="EMBL" id="AF466644">
    <property type="protein sequence ID" value="AAL77031.1"/>
    <property type="molecule type" value="Genomic_DNA"/>
</dbReference>
<dbReference type="EMBL" id="AF466645">
    <property type="protein sequence ID" value="AAL77032.1"/>
    <property type="molecule type" value="Genomic_DNA"/>
</dbReference>
<dbReference type="EMBL" id="AE001572">
    <property type="protein sequence ID" value="AAD19798.1"/>
    <property type="molecule type" value="Genomic_DNA"/>
</dbReference>
<dbReference type="EMBL" id="AE014297">
    <property type="protein sequence ID" value="AAF54085.2"/>
    <property type="molecule type" value="Genomic_DNA"/>
</dbReference>
<dbReference type="EMBL" id="AE014297">
    <property type="protein sequence ID" value="AAN13368.1"/>
    <property type="molecule type" value="Genomic_DNA"/>
</dbReference>
<dbReference type="EMBL" id="AE014297">
    <property type="protein sequence ID" value="AAN13369.1"/>
    <property type="molecule type" value="Genomic_DNA"/>
</dbReference>
<dbReference type="EMBL" id="AE014297">
    <property type="protein sequence ID" value="AAN13371.2"/>
    <property type="molecule type" value="Genomic_DNA"/>
</dbReference>
<dbReference type="EMBL" id="AE014297">
    <property type="protein sequence ID" value="AAO41514.1"/>
    <property type="molecule type" value="Genomic_DNA"/>
</dbReference>
<dbReference type="EMBL" id="AY058658">
    <property type="protein sequence ID" value="AAL13887.1"/>
    <property type="molecule type" value="mRNA"/>
</dbReference>
<dbReference type="EMBL" id="BT021332">
    <property type="protein sequence ID" value="AAX33480.1"/>
    <property type="molecule type" value="mRNA"/>
</dbReference>
<dbReference type="EMBL" id="M14549">
    <property type="protein sequence ID" value="AAA28385.1"/>
    <property type="molecule type" value="Genomic_DNA"/>
</dbReference>
<dbReference type="EMBL" id="K03517">
    <property type="protein sequence ID" value="AAA28391.1"/>
    <property type="molecule type" value="mRNA"/>
</dbReference>
<dbReference type="PIR" id="S00835">
    <property type="entry name" value="WJFFBC"/>
</dbReference>
<dbReference type="RefSeq" id="NP_476825.1">
    <molecule id="P09081-3"/>
    <property type="nucleotide sequence ID" value="NM_057477.5"/>
</dbReference>
<dbReference type="RefSeq" id="NP_731111.1">
    <molecule id="P09081-2"/>
    <property type="nucleotide sequence ID" value="NM_169157.3"/>
</dbReference>
<dbReference type="RefSeq" id="NP_731113.2">
    <molecule id="P09081-4"/>
    <property type="nucleotide sequence ID" value="NM_169159.4"/>
</dbReference>
<dbReference type="RefSeq" id="NP_788587.1">
    <molecule id="P09081-1"/>
    <property type="nucleotide sequence ID" value="NM_176410.3"/>
</dbReference>
<dbReference type="RefSeq" id="NP_788588.1">
    <molecule id="P09081-5"/>
    <property type="nucleotide sequence ID" value="NM_176411.3"/>
</dbReference>
<dbReference type="PDB" id="1ZQ3">
    <property type="method" value="NMR"/>
    <property type="chains" value="P=97-163"/>
</dbReference>
<dbReference type="PDBsum" id="1ZQ3"/>
<dbReference type="BMRB" id="P09081"/>
<dbReference type="SMR" id="P09081"/>
<dbReference type="BioGRID" id="66028">
    <property type="interactions" value="100"/>
</dbReference>
<dbReference type="FunCoup" id="P09081">
    <property type="interactions" value="343"/>
</dbReference>
<dbReference type="IntAct" id="P09081">
    <property type="interactions" value="47"/>
</dbReference>
<dbReference type="MINT" id="P09081"/>
<dbReference type="STRING" id="7227.FBpp0081168"/>
<dbReference type="GlyGen" id="P09081">
    <property type="glycosylation" value="1 site"/>
</dbReference>
<dbReference type="PaxDb" id="7227-FBpp0081168"/>
<dbReference type="DNASU" id="40830"/>
<dbReference type="EnsemblMetazoa" id="FBtr0081664">
    <molecule id="P09081-3"/>
    <property type="protein sequence ID" value="FBpp0081164"/>
    <property type="gene ID" value="FBgn0000166"/>
</dbReference>
<dbReference type="EnsemblMetazoa" id="FBtr0081665">
    <molecule id="P09081-2"/>
    <property type="protein sequence ID" value="FBpp0081165"/>
    <property type="gene ID" value="FBgn0000166"/>
</dbReference>
<dbReference type="EnsemblMetazoa" id="FBtr0081666">
    <molecule id="P09081-4"/>
    <property type="protein sequence ID" value="FBpp0081166"/>
    <property type="gene ID" value="FBgn0000166"/>
</dbReference>
<dbReference type="EnsemblMetazoa" id="FBtr0081667">
    <molecule id="P09081-5"/>
    <property type="protein sequence ID" value="FBpp0081167"/>
    <property type="gene ID" value="FBgn0000166"/>
</dbReference>
<dbReference type="EnsemblMetazoa" id="FBtr0081668">
    <molecule id="P09081-1"/>
    <property type="protein sequence ID" value="FBpp0081168"/>
    <property type="gene ID" value="FBgn0000166"/>
</dbReference>
<dbReference type="GeneID" id="40830"/>
<dbReference type="KEGG" id="dme:Dmel_CG1034"/>
<dbReference type="AGR" id="FB:FBgn0000166"/>
<dbReference type="CTD" id="40830"/>
<dbReference type="FlyBase" id="FBgn0000166">
    <property type="gene designation" value="bcd"/>
</dbReference>
<dbReference type="VEuPathDB" id="VectorBase:FBgn0000166"/>
<dbReference type="eggNOG" id="KOG0489">
    <property type="taxonomic scope" value="Eukaryota"/>
</dbReference>
<dbReference type="GeneTree" id="ENSGT00940000172642"/>
<dbReference type="InParanoid" id="P09081"/>
<dbReference type="OMA" id="FYHHTLP"/>
<dbReference type="OrthoDB" id="6159439at2759"/>
<dbReference type="PhylomeDB" id="P09081"/>
<dbReference type="SignaLink" id="P09081"/>
<dbReference type="BioGRID-ORCS" id="40830">
    <property type="hits" value="0 hits in 1 CRISPR screen"/>
</dbReference>
<dbReference type="EvolutionaryTrace" id="P09081"/>
<dbReference type="GenomeRNAi" id="40830"/>
<dbReference type="PRO" id="PR:P09081"/>
<dbReference type="Proteomes" id="UP000000803">
    <property type="component" value="Chromosome 3R"/>
</dbReference>
<dbReference type="Bgee" id="FBgn0000166">
    <property type="expression patterns" value="Expressed in cleaving embryo and 18 other cell types or tissues"/>
</dbReference>
<dbReference type="GO" id="GO:0005634">
    <property type="term" value="C:nucleus"/>
    <property type="evidence" value="ECO:0000314"/>
    <property type="project" value="FlyBase"/>
</dbReference>
<dbReference type="GO" id="GO:0003700">
    <property type="term" value="F:DNA-binding transcription factor activity"/>
    <property type="evidence" value="ECO:0000314"/>
    <property type="project" value="FlyBase"/>
</dbReference>
<dbReference type="GO" id="GO:0000981">
    <property type="term" value="F:DNA-binding transcription factor activity, RNA polymerase II-specific"/>
    <property type="evidence" value="ECO:0000314"/>
    <property type="project" value="UniProtKB"/>
</dbReference>
<dbReference type="GO" id="GO:0003730">
    <property type="term" value="F:mRNA 3'-UTR binding"/>
    <property type="evidence" value="ECO:0000315"/>
    <property type="project" value="FlyBase"/>
</dbReference>
<dbReference type="GO" id="GO:0000978">
    <property type="term" value="F:RNA polymerase II cis-regulatory region sequence-specific DNA binding"/>
    <property type="evidence" value="ECO:0000318"/>
    <property type="project" value="GO_Central"/>
</dbReference>
<dbReference type="GO" id="GO:0043565">
    <property type="term" value="F:sequence-specific DNA binding"/>
    <property type="evidence" value="ECO:0000314"/>
    <property type="project" value="UniProtKB"/>
</dbReference>
<dbReference type="GO" id="GO:0030371">
    <property type="term" value="F:translation repressor activity"/>
    <property type="evidence" value="ECO:0000316"/>
    <property type="project" value="FlyBase"/>
</dbReference>
<dbReference type="GO" id="GO:0007355">
    <property type="term" value="P:anterior region determination"/>
    <property type="evidence" value="ECO:0000315"/>
    <property type="project" value="FlyBase"/>
</dbReference>
<dbReference type="GO" id="GO:0009948">
    <property type="term" value="P:anterior/posterior axis specification"/>
    <property type="evidence" value="ECO:0000304"/>
    <property type="project" value="FlyBase"/>
</dbReference>
<dbReference type="GO" id="GO:0008595">
    <property type="term" value="P:anterior/posterior axis specification, embryo"/>
    <property type="evidence" value="ECO:0000314"/>
    <property type="project" value="UniProtKB"/>
</dbReference>
<dbReference type="GO" id="GO:0008358">
    <property type="term" value="P:maternal determination of anterior/posterior axis, embryo"/>
    <property type="evidence" value="ECO:0000304"/>
    <property type="project" value="FlyBase"/>
</dbReference>
<dbReference type="GO" id="GO:0017148">
    <property type="term" value="P:negative regulation of translation"/>
    <property type="evidence" value="ECO:0000315"/>
    <property type="project" value="FlyBase"/>
</dbReference>
<dbReference type="GO" id="GO:0048477">
    <property type="term" value="P:oogenesis"/>
    <property type="evidence" value="ECO:0000315"/>
    <property type="project" value="FlyBase"/>
</dbReference>
<dbReference type="GO" id="GO:0045944">
    <property type="term" value="P:positive regulation of transcription by RNA polymerase II"/>
    <property type="evidence" value="ECO:0000314"/>
    <property type="project" value="FlyBase"/>
</dbReference>
<dbReference type="GO" id="GO:0006355">
    <property type="term" value="P:regulation of DNA-templated transcription"/>
    <property type="evidence" value="ECO:0000315"/>
    <property type="project" value="FlyBase"/>
</dbReference>
<dbReference type="GO" id="GO:0006357">
    <property type="term" value="P:regulation of transcription by RNA polymerase II"/>
    <property type="evidence" value="ECO:0000318"/>
    <property type="project" value="GO_Central"/>
</dbReference>
<dbReference type="GO" id="GO:0007367">
    <property type="term" value="P:segment polarity determination"/>
    <property type="evidence" value="ECO:0000315"/>
    <property type="project" value="FlyBase"/>
</dbReference>
<dbReference type="GO" id="GO:0008293">
    <property type="term" value="P:torso signaling pathway"/>
    <property type="evidence" value="ECO:0000315"/>
    <property type="project" value="FlyBase"/>
</dbReference>
<dbReference type="CDD" id="cd00086">
    <property type="entry name" value="homeodomain"/>
    <property type="match status" value="1"/>
</dbReference>
<dbReference type="Gene3D" id="1.10.10.60">
    <property type="entry name" value="Homeodomain-like"/>
    <property type="match status" value="1"/>
</dbReference>
<dbReference type="InterPro" id="IPR001356">
    <property type="entry name" value="HD"/>
</dbReference>
<dbReference type="InterPro" id="IPR017970">
    <property type="entry name" value="Homeobox_CS"/>
</dbReference>
<dbReference type="InterPro" id="IPR009057">
    <property type="entry name" value="Homeodomain-like_sf"/>
</dbReference>
<dbReference type="PANTHER" id="PTHR45664:SF12">
    <property type="entry name" value="PANCREAS_DUODENUM HOMEOBOX PROTEIN 1"/>
    <property type="match status" value="1"/>
</dbReference>
<dbReference type="PANTHER" id="PTHR45664">
    <property type="entry name" value="PROTEIN ZERKNUELLT 1-RELATED"/>
    <property type="match status" value="1"/>
</dbReference>
<dbReference type="Pfam" id="PF00046">
    <property type="entry name" value="Homeodomain"/>
    <property type="match status" value="1"/>
</dbReference>
<dbReference type="SMART" id="SM00389">
    <property type="entry name" value="HOX"/>
    <property type="match status" value="1"/>
</dbReference>
<dbReference type="SUPFAM" id="SSF46689">
    <property type="entry name" value="Homeodomain-like"/>
    <property type="match status" value="1"/>
</dbReference>
<dbReference type="PROSITE" id="PS00027">
    <property type="entry name" value="HOMEOBOX_1"/>
    <property type="match status" value="1"/>
</dbReference>
<dbReference type="PROSITE" id="PS50071">
    <property type="entry name" value="HOMEOBOX_2"/>
    <property type="match status" value="1"/>
</dbReference>
<reference key="1">
    <citation type="journal article" date="1988" name="EMBO J.">
        <title>The role of localization of bicoid RNA in organizing the anterior pattern of the Drosophila embryo.</title>
        <authorList>
            <person name="Berleth T."/>
            <person name="Burri M."/>
            <person name="Thoma G."/>
            <person name="Bopp D."/>
            <person name="Richstein S."/>
            <person name="Frigerio G."/>
            <person name="Noll M."/>
            <person name="Nuesslein-Volhard C."/>
        </authorList>
    </citation>
    <scope>NUCLEOTIDE SEQUENCE [GENOMIC DNA / MRNA] (ISOFORMS A; D AND G)</scope>
    <scope>FUNCTION</scope>
    <scope>TISSUE SPECIFICITY</scope>
    <scope>DEVELOPMENTAL STAGE</scope>
    <source>
        <strain>Oregon-R</strain>
        <tissue>Embryo</tissue>
    </source>
</reference>
<reference key="2">
    <citation type="journal article" date="2002" name="Mol. Biol. Evol.">
        <title>DNA sequence variation at a duplicated gene: excess of replacement polymorphism and extensive haplotype structure in the Drosophila melanogaster bicoid region.</title>
        <authorList>
            <person name="Baines J.F."/>
            <person name="Chen Y."/>
            <person name="Das A."/>
            <person name="Stephan W."/>
        </authorList>
    </citation>
    <scope>NUCLEOTIDE SEQUENCE [GENOMIC DNA] (ISOFORM D)</scope>
    <scope>VARIANTS</scope>
    <source>
        <strain>Z116</strain>
        <strain>Z131</strain>
        <strain>Z145</strain>
        <strain>Z157</strain>
        <strain>Z159</strain>
        <strain>Z184</strain>
        <strain>Z186</strain>
        <strain>Z191</strain>
        <strain>Z194</strain>
        <strain>Z196</strain>
        <strain>Z197</strain>
        <strain>Z209</strain>
        <strain>Z210</strain>
        <strain>Z212</strain>
        <strain>Z216</strain>
        <strain>Z229</strain>
        <strain>Z266</strain>
        <strain>Z346</strain>
        <strain>Z362</strain>
        <strain>Z377</strain>
        <strain>Z384</strain>
        <strain>Z398</strain>
        <strain>Z82</strain>
        <strain>Z84</strain>
        <strain>Z95</strain>
    </source>
</reference>
<reference key="3">
    <citation type="submission" date="1999-01" db="EMBL/GenBank/DDBJ databases">
        <title>Complete sequence of the Antennapedia complex of Drosophila.</title>
        <authorList>
            <person name="Celniker S.E."/>
            <person name="Pfeiffer B."/>
            <person name="Knafels J."/>
            <person name="Martin C.H."/>
            <person name="Mayeda C.A."/>
            <person name="Palazzolo M.J."/>
        </authorList>
    </citation>
    <scope>NUCLEOTIDE SEQUENCE [LARGE SCALE GENOMIC DNA]</scope>
    <source>
        <strain>Berkeley</strain>
    </source>
</reference>
<reference key="4">
    <citation type="journal article" date="2000" name="Science">
        <title>The genome sequence of Drosophila melanogaster.</title>
        <authorList>
            <person name="Adams M.D."/>
            <person name="Celniker S.E."/>
            <person name="Holt R.A."/>
            <person name="Evans C.A."/>
            <person name="Gocayne J.D."/>
            <person name="Amanatides P.G."/>
            <person name="Scherer S.E."/>
            <person name="Li P.W."/>
            <person name="Hoskins R.A."/>
            <person name="Galle R.F."/>
            <person name="George R.A."/>
            <person name="Lewis S.E."/>
            <person name="Richards S."/>
            <person name="Ashburner M."/>
            <person name="Henderson S.N."/>
            <person name="Sutton G.G."/>
            <person name="Wortman J.R."/>
            <person name="Yandell M.D."/>
            <person name="Zhang Q."/>
            <person name="Chen L.X."/>
            <person name="Brandon R.C."/>
            <person name="Rogers Y.-H.C."/>
            <person name="Blazej R.G."/>
            <person name="Champe M."/>
            <person name="Pfeiffer B.D."/>
            <person name="Wan K.H."/>
            <person name="Doyle C."/>
            <person name="Baxter E.G."/>
            <person name="Helt G."/>
            <person name="Nelson C.R."/>
            <person name="Miklos G.L.G."/>
            <person name="Abril J.F."/>
            <person name="Agbayani A."/>
            <person name="An H.-J."/>
            <person name="Andrews-Pfannkoch C."/>
            <person name="Baldwin D."/>
            <person name="Ballew R.M."/>
            <person name="Basu A."/>
            <person name="Baxendale J."/>
            <person name="Bayraktaroglu L."/>
            <person name="Beasley E.M."/>
            <person name="Beeson K.Y."/>
            <person name="Benos P.V."/>
            <person name="Berman B.P."/>
            <person name="Bhandari D."/>
            <person name="Bolshakov S."/>
            <person name="Borkova D."/>
            <person name="Botchan M.R."/>
            <person name="Bouck J."/>
            <person name="Brokstein P."/>
            <person name="Brottier P."/>
            <person name="Burtis K.C."/>
            <person name="Busam D.A."/>
            <person name="Butler H."/>
            <person name="Cadieu E."/>
            <person name="Center A."/>
            <person name="Chandra I."/>
            <person name="Cherry J.M."/>
            <person name="Cawley S."/>
            <person name="Dahlke C."/>
            <person name="Davenport L.B."/>
            <person name="Davies P."/>
            <person name="de Pablos B."/>
            <person name="Delcher A."/>
            <person name="Deng Z."/>
            <person name="Mays A.D."/>
            <person name="Dew I."/>
            <person name="Dietz S.M."/>
            <person name="Dodson K."/>
            <person name="Doup L.E."/>
            <person name="Downes M."/>
            <person name="Dugan-Rocha S."/>
            <person name="Dunkov B.C."/>
            <person name="Dunn P."/>
            <person name="Durbin K.J."/>
            <person name="Evangelista C.C."/>
            <person name="Ferraz C."/>
            <person name="Ferriera S."/>
            <person name="Fleischmann W."/>
            <person name="Fosler C."/>
            <person name="Gabrielian A.E."/>
            <person name="Garg N.S."/>
            <person name="Gelbart W.M."/>
            <person name="Glasser K."/>
            <person name="Glodek A."/>
            <person name="Gong F."/>
            <person name="Gorrell J.H."/>
            <person name="Gu Z."/>
            <person name="Guan P."/>
            <person name="Harris M."/>
            <person name="Harris N.L."/>
            <person name="Harvey D.A."/>
            <person name="Heiman T.J."/>
            <person name="Hernandez J.R."/>
            <person name="Houck J."/>
            <person name="Hostin D."/>
            <person name="Houston K.A."/>
            <person name="Howland T.J."/>
            <person name="Wei M.-H."/>
            <person name="Ibegwam C."/>
            <person name="Jalali M."/>
            <person name="Kalush F."/>
            <person name="Karpen G.H."/>
            <person name="Ke Z."/>
            <person name="Kennison J.A."/>
            <person name="Ketchum K.A."/>
            <person name="Kimmel B.E."/>
            <person name="Kodira C.D."/>
            <person name="Kraft C.L."/>
            <person name="Kravitz S."/>
            <person name="Kulp D."/>
            <person name="Lai Z."/>
            <person name="Lasko P."/>
            <person name="Lei Y."/>
            <person name="Levitsky A.A."/>
            <person name="Li J.H."/>
            <person name="Li Z."/>
            <person name="Liang Y."/>
            <person name="Lin X."/>
            <person name="Liu X."/>
            <person name="Mattei B."/>
            <person name="McIntosh T.C."/>
            <person name="McLeod M.P."/>
            <person name="McPherson D."/>
            <person name="Merkulov G."/>
            <person name="Milshina N.V."/>
            <person name="Mobarry C."/>
            <person name="Morris J."/>
            <person name="Moshrefi A."/>
            <person name="Mount S.M."/>
            <person name="Moy M."/>
            <person name="Murphy B."/>
            <person name="Murphy L."/>
            <person name="Muzny D.M."/>
            <person name="Nelson D.L."/>
            <person name="Nelson D.R."/>
            <person name="Nelson K.A."/>
            <person name="Nixon K."/>
            <person name="Nusskern D.R."/>
            <person name="Pacleb J.M."/>
            <person name="Palazzolo M."/>
            <person name="Pittman G.S."/>
            <person name="Pan S."/>
            <person name="Pollard J."/>
            <person name="Puri V."/>
            <person name="Reese M.G."/>
            <person name="Reinert K."/>
            <person name="Remington K."/>
            <person name="Saunders R.D.C."/>
            <person name="Scheeler F."/>
            <person name="Shen H."/>
            <person name="Shue B.C."/>
            <person name="Siden-Kiamos I."/>
            <person name="Simpson M."/>
            <person name="Skupski M.P."/>
            <person name="Smith T.J."/>
            <person name="Spier E."/>
            <person name="Spradling A.C."/>
            <person name="Stapleton M."/>
            <person name="Strong R."/>
            <person name="Sun E."/>
            <person name="Svirskas R."/>
            <person name="Tector C."/>
            <person name="Turner R."/>
            <person name="Venter E."/>
            <person name="Wang A.H."/>
            <person name="Wang X."/>
            <person name="Wang Z.-Y."/>
            <person name="Wassarman D.A."/>
            <person name="Weinstock G.M."/>
            <person name="Weissenbach J."/>
            <person name="Williams S.M."/>
            <person name="Woodage T."/>
            <person name="Worley K.C."/>
            <person name="Wu D."/>
            <person name="Yang S."/>
            <person name="Yao Q.A."/>
            <person name="Ye J."/>
            <person name="Yeh R.-F."/>
            <person name="Zaveri J.S."/>
            <person name="Zhan M."/>
            <person name="Zhang G."/>
            <person name="Zhao Q."/>
            <person name="Zheng L."/>
            <person name="Zheng X.H."/>
            <person name="Zhong F.N."/>
            <person name="Zhong W."/>
            <person name="Zhou X."/>
            <person name="Zhu S.C."/>
            <person name="Zhu X."/>
            <person name="Smith H.O."/>
            <person name="Gibbs R.A."/>
            <person name="Myers E.W."/>
            <person name="Rubin G.M."/>
            <person name="Venter J.C."/>
        </authorList>
    </citation>
    <scope>NUCLEOTIDE SEQUENCE [LARGE SCALE GENOMIC DNA]</scope>
    <source>
        <strain>Berkeley</strain>
    </source>
</reference>
<reference key="5">
    <citation type="journal article" date="2002" name="Genome Biol.">
        <title>Annotation of the Drosophila melanogaster euchromatic genome: a systematic review.</title>
        <authorList>
            <person name="Misra S."/>
            <person name="Crosby M.A."/>
            <person name="Mungall C.J."/>
            <person name="Matthews B.B."/>
            <person name="Campbell K.S."/>
            <person name="Hradecky P."/>
            <person name="Huang Y."/>
            <person name="Kaminker J.S."/>
            <person name="Millburn G.H."/>
            <person name="Prochnik S.E."/>
            <person name="Smith C.D."/>
            <person name="Tupy J.L."/>
            <person name="Whitfield E.J."/>
            <person name="Bayraktaroglu L."/>
            <person name="Berman B.P."/>
            <person name="Bettencourt B.R."/>
            <person name="Celniker S.E."/>
            <person name="de Grey A.D.N.J."/>
            <person name="Drysdale R.A."/>
            <person name="Harris N.L."/>
            <person name="Richter J."/>
            <person name="Russo S."/>
            <person name="Schroeder A.J."/>
            <person name="Shu S.Q."/>
            <person name="Stapleton M."/>
            <person name="Yamada C."/>
            <person name="Ashburner M."/>
            <person name="Gelbart W.M."/>
            <person name="Rubin G.M."/>
            <person name="Lewis S.E."/>
        </authorList>
    </citation>
    <scope>GENOME REANNOTATION</scope>
    <scope>ALTERNATIVE SPLICING</scope>
    <source>
        <strain>Berkeley</strain>
    </source>
</reference>
<reference key="6">
    <citation type="journal article" date="2002" name="Genome Biol.">
        <title>A Drosophila full-length cDNA resource.</title>
        <authorList>
            <person name="Stapleton M."/>
            <person name="Carlson J.W."/>
            <person name="Brokstein P."/>
            <person name="Yu C."/>
            <person name="Champe M."/>
            <person name="George R.A."/>
            <person name="Guarin H."/>
            <person name="Kronmiller B."/>
            <person name="Pacleb J.M."/>
            <person name="Park S."/>
            <person name="Wan K.H."/>
            <person name="Rubin G.M."/>
            <person name="Celniker S.E."/>
        </authorList>
    </citation>
    <scope>NUCLEOTIDE SEQUENCE [LARGE SCALE MRNA] (ISOFORM D)</scope>
    <source>
        <strain>Berkeley</strain>
        <tissue>Embryo</tissue>
    </source>
</reference>
<reference key="7">
    <citation type="submission" date="2005-03" db="EMBL/GenBank/DDBJ databases">
        <authorList>
            <person name="Stapleton M."/>
            <person name="Carlson J.W."/>
            <person name="Chavez C."/>
            <person name="Frise E."/>
            <person name="George R.A."/>
            <person name="Pacleb J.M."/>
            <person name="Park S."/>
            <person name="Wan K.H."/>
            <person name="Yu C."/>
            <person name="Rubin G.M."/>
            <person name="Celniker S.E."/>
        </authorList>
    </citation>
    <scope>NUCLEOTIDE SEQUENCE [LARGE SCALE MRNA] (ISOFORM G)</scope>
    <source>
        <strain>Berkeley</strain>
        <tissue>Embryo</tissue>
    </source>
</reference>
<reference key="8">
    <citation type="journal article" date="1986" name="Cell">
        <title>Structure of the segmentation gene paired and the Drosophila PRD gene set as part of a gene network.</title>
        <authorList>
            <person name="Frigerio G."/>
            <person name="Burri M."/>
            <person name="Bopp D."/>
            <person name="Baumgartner S."/>
            <person name="Noll M."/>
        </authorList>
    </citation>
    <scope>NUCLEOTIDE SEQUENCE [GENOMIC DNA / MRNA] OF 12-47 AND 86-156 (ISOFORMS D/G)</scope>
</reference>
<reference key="9">
    <citation type="journal article" date="1989" name="Cell">
        <title>An RNA recognition motif in the bicoid protein.</title>
        <authorList>
            <person name="Rebagliati M."/>
        </authorList>
    </citation>
    <scope>FUNCTION</scope>
    <scope>POSSIBLE RNA-BINDING DOMAIN</scope>
</reference>
<reference key="10">
    <citation type="journal article" date="2000" name="Gene">
        <title>Identification of Drosophila bicoid-interacting proteins using a custom two-hybrid selection.</title>
        <authorList>
            <person name="Zhu W."/>
            <person name="Hanes S.D."/>
        </authorList>
    </citation>
    <scope>INTERACTION WITH BIN3</scope>
</reference>
<reference key="11">
    <citation type="journal article" date="2001" name="Dev. Genes Evol.">
        <title>Drosophila SAP18, a member of the Sin3/Rpd3 histone deacetylase complex, interacts with Bicoid and inhibits its activity.</title>
        <authorList>
            <person name="Zhu W."/>
            <person name="Foehr M."/>
            <person name="Jaynes J.B."/>
            <person name="Hanes S.D."/>
        </authorList>
    </citation>
    <scope>FUNCTION</scope>
    <scope>INTERACTION WITH BIN1</scope>
</reference>
<reference key="12">
    <citation type="journal article" date="2014" name="Genes Dev.">
        <title>Impacts of the ubiquitous factor Zelda on Bicoid-dependent DNA binding and transcription in Drosophila.</title>
        <authorList>
            <person name="Xu Z."/>
            <person name="Chen H."/>
            <person name="Ling J."/>
            <person name="Yu D."/>
            <person name="Struffi P."/>
            <person name="Small S."/>
        </authorList>
    </citation>
    <scope>FUNCTION</scope>
</reference>
<reference key="13">
    <citation type="journal article" date="2022" name="Elife">
        <title>Synthetic reconstruction of the hunchback promoter specifies the role of Bicoid, Zelda and Hunchback in the dynamics of its transcription.</title>
        <authorList>
            <person name="Fernandes G."/>
            <person name="Tran H."/>
            <person name="Andrieu M."/>
            <person name="Diaw Y."/>
            <person name="Perez Romero C."/>
            <person name="Fradin C."/>
            <person name="Coppey M."/>
            <person name="Walczak A.M."/>
            <person name="Dostatni N."/>
        </authorList>
    </citation>
    <scope>FUNCTION</scope>
</reference>
<reference evidence="16" key="14">
    <citation type="journal article" date="2006" name="J. Mol. Biol.">
        <title>The solution structure of the native K50 Bicoid homeodomain bound to the consensus TAATCC DNA-binding site.</title>
        <authorList>
            <person name="Baird-Titus J.M."/>
            <person name="Clark-Baldwin K."/>
            <person name="Dave V."/>
            <person name="Caperelli C.A."/>
            <person name="Ma J."/>
            <person name="Rance M."/>
        </authorList>
    </citation>
    <scope>STRUCTURE BY NMR OF 97-163 IN COMPLEX WITH DNA</scope>
    <scope>DNA-BINDING</scope>
</reference>
<gene>
    <name evidence="12 15" type="primary">bcd</name>
    <name type="ORF">CG1034</name>
</gene>
<name>BCD_DROME</name>
<accession>P09081</accession>
<accession>Q5BI92</accession>
<accession>Q86BA9</accession>
<accession>Q86BP2</accession>
<accession>Q8INR7</accession>
<accession>Q8ST46</accession>
<accession>Q8STB1</accession>
<accession>Q8T9S9</accession>
<accession>Q8T9T0</accession>
<accession>Q8T9T1</accession>
<accession>Q95TN3</accession>
<accession>Q9UAM0</accession>
<accession>Q9VI47</accession>
<comment type="function">
    <text evidence="4 6 7 8 9 10">Segment polarity transcription factor that provides positional cues for the development of head and thoracic segments (PubMed:24637116, PubMed:2901954, PubMed:35363606). Forms a protein concentration gradient that patterns the anterior-posterior axis during embryogenesis and promotes the expression of anterior gap genes, such as hunchback (hb), ocelliless (oc), and buttonhead (btd) (PubMed:24637116, PubMed:2901954, PubMed:35363606). Binds to regulatory DNA sequences containing a 5'-TAATCC-3' sequence motif (PubMed:16406070, PubMed:35363606). Also binds RNA (PubMed:2752425). Interacts with Bin1 to repress transcription of bicoid target genes in the anterior tip of the embryo; a process known as retraction (PubMed:11455422).</text>
</comment>
<comment type="subunit">
    <text evidence="3 4">Interacts with Bin1; in vitro and yeast cells (PubMed:11455422). Interacts with bin3 (PubMed:10717484).</text>
</comment>
<comment type="interaction">
    <interactant intactId="EBI-196628">
        <id>P09081</id>
    </interactant>
    <interactant intactId="EBI-129424">
        <id>Q9VEX9</id>
        <label>Bin1</label>
    </interactant>
    <organismsDiffer>false</organismsDiffer>
    <experiments>2</experiments>
</comment>
<comment type="interaction">
    <interactant intactId="EBI-196628">
        <id>P09081</id>
    </interactant>
    <interactant intactId="EBI-180984">
        <id>Q7K480</id>
        <label>bin3</label>
    </interactant>
    <organismsDiffer>false</organismsDiffer>
    <experiments>4</experiments>
</comment>
<comment type="interaction">
    <interactant intactId="EBI-196628">
        <id>P09081</id>
    </interactant>
    <interactant intactId="EBI-114439">
        <id>O97102</id>
        <label>Sumo</label>
    </interactant>
    <organismsDiffer>false</organismsDiffer>
    <experiments>3</experiments>
</comment>
<comment type="subcellular location">
    <subcellularLocation>
        <location>Nucleus</location>
    </subcellularLocation>
</comment>
<comment type="alternative products">
    <event type="alternative splicing"/>
    <isoform>
        <id>P09081-1</id>
        <name>G</name>
        <sequence type="displayed"/>
    </isoform>
    <isoform>
        <id>P09081-3</id>
        <name>A</name>
        <sequence type="described" ref="VSP_002235"/>
    </isoform>
    <isoform>
        <id>P09081-2</id>
        <name>D</name>
        <sequence type="described" ref="VSP_002234"/>
    </isoform>
    <isoform>
        <id>P09081-4</id>
        <name>E</name>
        <sequence type="described" ref="VSP_027203"/>
    </isoform>
    <isoform>
        <id>P09081-5</id>
        <name>F</name>
        <sequence type="described" ref="VSP_027203 VSP_002234"/>
    </isoform>
</comment>
<comment type="tissue specificity">
    <text evidence="9">Maternal expression is an anterior cap concentrated in the cortical cytoplasm (PubMed:2901954). Its transcript is produced maternally and sequestered near the anterior pole of the mature oocyte (PubMed:2901954). After egg deposition, it is translated into protein, which diffuses toward the posterior, forming a long-range anterior gradient (PubMed:2901954).</text>
</comment>
<comment type="developmental stage">
    <text evidence="9">Expressed both maternally and zygotically.</text>
</comment>
<comment type="similarity">
    <text evidence="13">Belongs to the paired homeobox family. Bicoid subfamily.</text>
</comment>
<protein>
    <recommendedName>
        <fullName evidence="12">Homeotic protein bicoid</fullName>
    </recommendedName>
    <alternativeName>
        <fullName>PRD-4</fullName>
    </alternativeName>
</protein>
<keyword id="KW-0002">3D-structure</keyword>
<keyword id="KW-0025">Alternative splicing</keyword>
<keyword id="KW-0217">Developmental protein</keyword>
<keyword id="KW-0238">DNA-binding</keyword>
<keyword id="KW-0371">Homeobox</keyword>
<keyword id="KW-0539">Nucleus</keyword>
<keyword id="KW-1185">Reference proteome</keyword>
<keyword id="KW-0694">RNA-binding</keyword>
<keyword id="KW-0804">Transcription</keyword>
<keyword id="KW-0805">Transcription regulation</keyword>
<feature type="chain" id="PRO_0000049014" description="Homeotic protein bicoid">
    <location>
        <begin position="1"/>
        <end position="494"/>
    </location>
</feature>
<feature type="DNA-binding region" description="Homeobox" evidence="1">
    <location>
        <begin position="97"/>
        <end position="156"/>
    </location>
</feature>
<feature type="region of interest" description="Disordered" evidence="2">
    <location>
        <begin position="1"/>
        <end position="49"/>
    </location>
</feature>
<feature type="region of interest" description="Disordered" evidence="2">
    <location>
        <begin position="149"/>
        <end position="210"/>
    </location>
</feature>
<feature type="region of interest" description="Disordered" evidence="2">
    <location>
        <begin position="263"/>
        <end position="293"/>
    </location>
</feature>
<feature type="region of interest" description="RNA-binding" evidence="14">
    <location>
        <begin position="433"/>
        <end position="440"/>
    </location>
</feature>
<feature type="compositionally biased region" description="Basic residues" evidence="2">
    <location>
        <begin position="14"/>
        <end position="40"/>
    </location>
</feature>
<feature type="compositionally biased region" description="Basic and acidic residues" evidence="2">
    <location>
        <begin position="154"/>
        <end position="163"/>
    </location>
</feature>
<feature type="splice variant" id="VSP_027203" description="In isoform E and isoform F." evidence="13">
    <location>
        <begin position="1"/>
        <end position="76"/>
    </location>
</feature>
<feature type="splice variant" id="VSP_002235" description="In isoform A." evidence="12">
    <location>
        <begin position="56"/>
        <end position="400"/>
    </location>
</feature>
<feature type="splice variant" id="VSP_002234" description="In isoform D and isoform F." evidence="11 12">
    <location>
        <begin position="81"/>
        <end position="85"/>
    </location>
</feature>
<feature type="sequence variant" description="In strain: Z362." evidence="5">
    <original>Q</original>
    <variation>H</variation>
    <location>
        <position position="284"/>
    </location>
</feature>
<feature type="sequence variant" description="In strain: Z229." evidence="5">
    <original>E</original>
    <variation>K</variation>
    <location>
        <position position="317"/>
    </location>
</feature>
<feature type="sequence variant" description="In strain: Z95, Z197 and Z229." evidence="5">
    <original>A</original>
    <variation>S</variation>
    <location>
        <position position="337"/>
    </location>
</feature>
<feature type="sequence variant" description="In strain: Z184, Z210 and Z216." evidence="5">
    <original>A</original>
    <variation>P</variation>
    <location>
        <position position="438"/>
    </location>
</feature>
<feature type="sequence variant" description="In strain: Z157." evidence="5">
    <original>V</original>
    <variation>L</variation>
    <location>
        <position position="458"/>
    </location>
</feature>
<feature type="sequence variant" description="In strain: Oregon-R, Z145, Z266, Z346 and Z398." evidence="5">
    <original>M</original>
    <variation>L</variation>
    <location>
        <position position="460"/>
    </location>
</feature>
<feature type="sequence conflict" description="In Ref. 1; CAB37631." evidence="13" ref="1">
    <original>F</original>
    <variation>S</variation>
    <location>
        <position position="298"/>
    </location>
</feature>
<feature type="helix" evidence="17">
    <location>
        <begin position="106"/>
        <end position="116"/>
    </location>
</feature>
<feature type="helix" evidence="17">
    <location>
        <begin position="124"/>
        <end position="134"/>
    </location>
</feature>
<feature type="helix" evidence="17">
    <location>
        <begin position="138"/>
        <end position="157"/>
    </location>
</feature>